<name>CARY_GEOSE</name>
<keyword id="KW-0028">Amino-acid biosynthesis</keyword>
<keyword id="KW-0055">Arginine biosynthesis</keyword>
<keyword id="KW-0067">ATP-binding</keyword>
<keyword id="KW-0436">Ligase</keyword>
<keyword id="KW-0460">Magnesium</keyword>
<keyword id="KW-0464">Manganese</keyword>
<keyword id="KW-0479">Metal-binding</keyword>
<keyword id="KW-0547">Nucleotide-binding</keyword>
<keyword id="KW-0665">Pyrimidine biosynthesis</keyword>
<keyword id="KW-0677">Repeat</keyword>
<feature type="chain" id="PRO_0000144990" description="Carbamoyl phosphate synthase arginine-specific large chain">
    <location>
        <begin position="1"/>
        <end position="1043"/>
    </location>
</feature>
<feature type="domain" description="ATP-grasp 1" evidence="1">
    <location>
        <begin position="134"/>
        <end position="328"/>
    </location>
</feature>
<feature type="domain" description="ATP-grasp 2" evidence="1">
    <location>
        <begin position="676"/>
        <end position="863"/>
    </location>
</feature>
<feature type="domain" description="MGS-like" evidence="1">
    <location>
        <begin position="930"/>
        <end position="1037"/>
    </location>
</feature>
<feature type="region of interest" description="Carboxyphosphate synthetic domain" evidence="1">
    <location>
        <begin position="1"/>
        <end position="402"/>
    </location>
</feature>
<feature type="region of interest" description="Oligomerization domain">
    <location>
        <begin position="403"/>
        <end position="550"/>
    </location>
</feature>
<feature type="region of interest" description="Oligomerization domain" evidence="1">
    <location>
        <begin position="403"/>
        <end position="549"/>
    </location>
</feature>
<feature type="region of interest" description="Carbamoyl phosphate synthetic domain" evidence="1">
    <location>
        <begin position="550"/>
        <end position="932"/>
    </location>
</feature>
<feature type="region of interest" description="Carbamoyl phosphate synthetic domain">
    <location>
        <begin position="551"/>
        <end position="932"/>
    </location>
</feature>
<feature type="region of interest" description="Allosteric domain" evidence="1">
    <location>
        <begin position="933"/>
        <end position="1043"/>
    </location>
</feature>
<feature type="binding site" evidence="1">
    <location>
        <position position="170"/>
    </location>
    <ligand>
        <name>ATP</name>
        <dbReference type="ChEBI" id="CHEBI:30616"/>
        <label>1</label>
    </ligand>
</feature>
<feature type="binding site" evidence="1">
    <location>
        <position position="176"/>
    </location>
    <ligand>
        <name>ATP</name>
        <dbReference type="ChEBI" id="CHEBI:30616"/>
        <label>1</label>
    </ligand>
</feature>
<feature type="binding site" evidence="1">
    <location>
        <position position="177"/>
    </location>
    <ligand>
        <name>ATP</name>
        <dbReference type="ChEBI" id="CHEBI:30616"/>
        <label>1</label>
    </ligand>
</feature>
<feature type="binding site" evidence="1">
    <location>
        <position position="209"/>
    </location>
    <ligand>
        <name>ATP</name>
        <dbReference type="ChEBI" id="CHEBI:30616"/>
        <label>1</label>
    </ligand>
</feature>
<feature type="binding site" evidence="1">
    <location>
        <position position="211"/>
    </location>
    <ligand>
        <name>ATP</name>
        <dbReference type="ChEBI" id="CHEBI:30616"/>
        <label>1</label>
    </ligand>
</feature>
<feature type="binding site" evidence="1">
    <location>
        <position position="216"/>
    </location>
    <ligand>
        <name>ATP</name>
        <dbReference type="ChEBI" id="CHEBI:30616"/>
        <label>1</label>
    </ligand>
</feature>
<feature type="binding site" evidence="1">
    <location>
        <position position="242"/>
    </location>
    <ligand>
        <name>ATP</name>
        <dbReference type="ChEBI" id="CHEBI:30616"/>
        <label>1</label>
    </ligand>
</feature>
<feature type="binding site" evidence="1">
    <location>
        <position position="243"/>
    </location>
    <ligand>
        <name>ATP</name>
        <dbReference type="ChEBI" id="CHEBI:30616"/>
        <label>1</label>
    </ligand>
</feature>
<feature type="binding site" evidence="1">
    <location>
        <position position="244"/>
    </location>
    <ligand>
        <name>ATP</name>
        <dbReference type="ChEBI" id="CHEBI:30616"/>
        <label>1</label>
    </ligand>
</feature>
<feature type="binding site" evidence="1">
    <location>
        <position position="285"/>
    </location>
    <ligand>
        <name>ATP</name>
        <dbReference type="ChEBI" id="CHEBI:30616"/>
        <label>1</label>
    </ligand>
</feature>
<feature type="binding site" evidence="1">
    <location>
        <position position="285"/>
    </location>
    <ligand>
        <name>Mg(2+)</name>
        <dbReference type="ChEBI" id="CHEBI:18420"/>
        <label>1</label>
    </ligand>
</feature>
<feature type="binding site" evidence="1">
    <location>
        <position position="285"/>
    </location>
    <ligand>
        <name>Mn(2+)</name>
        <dbReference type="ChEBI" id="CHEBI:29035"/>
        <label>1</label>
    </ligand>
</feature>
<feature type="binding site" evidence="1">
    <location>
        <position position="299"/>
    </location>
    <ligand>
        <name>ATP</name>
        <dbReference type="ChEBI" id="CHEBI:30616"/>
        <label>1</label>
    </ligand>
</feature>
<feature type="binding site" evidence="1">
    <location>
        <position position="299"/>
    </location>
    <ligand>
        <name>Mg(2+)</name>
        <dbReference type="ChEBI" id="CHEBI:18420"/>
        <label>1</label>
    </ligand>
</feature>
<feature type="binding site" evidence="1">
    <location>
        <position position="299"/>
    </location>
    <ligand>
        <name>Mg(2+)</name>
        <dbReference type="ChEBI" id="CHEBI:18420"/>
        <label>2</label>
    </ligand>
</feature>
<feature type="binding site" evidence="1">
    <location>
        <position position="299"/>
    </location>
    <ligand>
        <name>Mn(2+)</name>
        <dbReference type="ChEBI" id="CHEBI:29035"/>
        <label>1</label>
    </ligand>
</feature>
<feature type="binding site" evidence="1">
    <location>
        <position position="299"/>
    </location>
    <ligand>
        <name>Mn(2+)</name>
        <dbReference type="ChEBI" id="CHEBI:29035"/>
        <label>2</label>
    </ligand>
</feature>
<feature type="binding site" evidence="1">
    <location>
        <position position="301"/>
    </location>
    <ligand>
        <name>Mg(2+)</name>
        <dbReference type="ChEBI" id="CHEBI:18420"/>
        <label>2</label>
    </ligand>
</feature>
<feature type="binding site" evidence="1">
    <location>
        <position position="301"/>
    </location>
    <ligand>
        <name>Mn(2+)</name>
        <dbReference type="ChEBI" id="CHEBI:29035"/>
        <label>2</label>
    </ligand>
</feature>
<feature type="binding site" evidence="1">
    <location>
        <position position="712"/>
    </location>
    <ligand>
        <name>ATP</name>
        <dbReference type="ChEBI" id="CHEBI:30616"/>
        <label>2</label>
    </ligand>
</feature>
<feature type="binding site" evidence="1">
    <location>
        <position position="748"/>
    </location>
    <ligand>
        <name>ATP</name>
        <dbReference type="ChEBI" id="CHEBI:30616"/>
        <label>2</label>
    </ligand>
</feature>
<feature type="binding site" evidence="1">
    <location>
        <position position="750"/>
    </location>
    <ligand>
        <name>ATP</name>
        <dbReference type="ChEBI" id="CHEBI:30616"/>
        <label>2</label>
    </ligand>
</feature>
<feature type="binding site" evidence="1">
    <location>
        <position position="754"/>
    </location>
    <ligand>
        <name>ATP</name>
        <dbReference type="ChEBI" id="CHEBI:30616"/>
        <label>2</label>
    </ligand>
</feature>
<feature type="binding site" evidence="1">
    <location>
        <position position="779"/>
    </location>
    <ligand>
        <name>ATP</name>
        <dbReference type="ChEBI" id="CHEBI:30616"/>
        <label>2</label>
    </ligand>
</feature>
<feature type="binding site" evidence="1">
    <location>
        <position position="780"/>
    </location>
    <ligand>
        <name>ATP</name>
        <dbReference type="ChEBI" id="CHEBI:30616"/>
        <label>2</label>
    </ligand>
</feature>
<feature type="binding site" evidence="1">
    <location>
        <position position="781"/>
    </location>
    <ligand>
        <name>ATP</name>
        <dbReference type="ChEBI" id="CHEBI:30616"/>
        <label>2</label>
    </ligand>
</feature>
<feature type="binding site" evidence="1">
    <location>
        <position position="782"/>
    </location>
    <ligand>
        <name>ATP</name>
        <dbReference type="ChEBI" id="CHEBI:30616"/>
        <label>2</label>
    </ligand>
</feature>
<feature type="binding site" evidence="1">
    <location>
        <position position="822"/>
    </location>
    <ligand>
        <name>ATP</name>
        <dbReference type="ChEBI" id="CHEBI:30616"/>
        <label>2</label>
    </ligand>
</feature>
<feature type="binding site" evidence="1">
    <location>
        <position position="822"/>
    </location>
    <ligand>
        <name>Mg(2+)</name>
        <dbReference type="ChEBI" id="CHEBI:18420"/>
        <label>3</label>
    </ligand>
</feature>
<feature type="binding site" evidence="1">
    <location>
        <position position="822"/>
    </location>
    <ligand>
        <name>Mn(2+)</name>
        <dbReference type="ChEBI" id="CHEBI:29035"/>
        <label>3</label>
    </ligand>
</feature>
<feature type="binding site" evidence="1">
    <location>
        <position position="834"/>
    </location>
    <ligand>
        <name>ATP</name>
        <dbReference type="ChEBI" id="CHEBI:30616"/>
        <label>2</label>
    </ligand>
</feature>
<feature type="binding site" evidence="1">
    <location>
        <position position="834"/>
    </location>
    <ligand>
        <name>Mg(2+)</name>
        <dbReference type="ChEBI" id="CHEBI:18420"/>
        <label>3</label>
    </ligand>
</feature>
<feature type="binding site" evidence="1">
    <location>
        <position position="834"/>
    </location>
    <ligand>
        <name>Mg(2+)</name>
        <dbReference type="ChEBI" id="CHEBI:18420"/>
        <label>4</label>
    </ligand>
</feature>
<feature type="binding site" evidence="1">
    <location>
        <position position="834"/>
    </location>
    <ligand>
        <name>Mn(2+)</name>
        <dbReference type="ChEBI" id="CHEBI:29035"/>
        <label>3</label>
    </ligand>
</feature>
<feature type="binding site" evidence="1">
    <location>
        <position position="834"/>
    </location>
    <ligand>
        <name>Mn(2+)</name>
        <dbReference type="ChEBI" id="CHEBI:29035"/>
        <label>4</label>
    </ligand>
</feature>
<feature type="binding site" evidence="1">
    <location>
        <position position="836"/>
    </location>
    <ligand>
        <name>Mg(2+)</name>
        <dbReference type="ChEBI" id="CHEBI:18420"/>
        <label>4</label>
    </ligand>
</feature>
<feature type="binding site" evidence="1">
    <location>
        <position position="836"/>
    </location>
    <ligand>
        <name>Mn(2+)</name>
        <dbReference type="ChEBI" id="CHEBI:29035"/>
        <label>4</label>
    </ligand>
</feature>
<organism>
    <name type="scientific">Geobacillus stearothermophilus</name>
    <name type="common">Bacillus stearothermophilus</name>
    <dbReference type="NCBI Taxonomy" id="1422"/>
    <lineage>
        <taxon>Bacteria</taxon>
        <taxon>Bacillati</taxon>
        <taxon>Bacillota</taxon>
        <taxon>Bacilli</taxon>
        <taxon>Bacillales</taxon>
        <taxon>Anoxybacillaceae</taxon>
        <taxon>Geobacillus</taxon>
    </lineage>
</organism>
<gene>
    <name type="primary">carB</name>
</gene>
<accession>Q9ZB63</accession>
<sequence length="1043" mass="114522">MPKDSSLQSILLIGSGRSSSAKAAEFDYSGTQACIAFKEEGYRVILVNNNPATIMTDDVHADAVYFEPLTVEAVEAIIAKETPDGLLATFGGQTGLNLAFQLHEAGVLKKYGVRLLGTPIEAIKRPRGGPRTFRALMHELGEPVPESEIVTSVEEAVAFAEQIGFPIIIRPAYTLGGTGGGIAENMEQFLALVEKGLNESPIHQCLIERSVAGFKEIEYEVMRDQSNTCITVCNMENVDPVGIHTGDSIVVAPSQTLTDEEYQMLRSSAVKIISALGIIGGCNIQFALDPNSKQYYLIEVNPRVSRSSALASKATGYPIAALPAKLAVGYTLAELVNPVTKTTYASFEPALDYVVVKFPRLPFDKFPHADRKLGTQMKATGEVMAIDRNMERAFQKAVQSLEGKNNGLLLPELSVKTNDELKQLLVDKDDRRFFAILELLRRGVAVEAIHKWTKIDRFFLCSFERLVALEKQAAAATLDTIEEQTFRFLKEKGCSDAFLAETWGVTELDVRNKRKELGIVPSYKMVDTCAAEFHSETDYYYSTYFGEDERKQPSGKEKVLIIGAGPIRIGQGIEFDYSSVHSVFALQKEGYETVMINNNPETVSTDFAVADRLYFEPLTLESVLDVIEAEQIKHVIVQFGGQTAINLVKGLEEAGVPLLGVTYDMIDQLEDRDRFYQLLEELDIPHVPGLVANNAEELAAKAAEIGYPVLLRPSYVIGGCGMFIVHSEAQLAALIEQGELTYPILIDAYLDGKEAEADIVTDGTDIVLPVIIEHVEKAGVHSGDSYAWLPAQTLTGEEKAKIIDYAGRIAKKLGFKGIMNIQYVIADGNVYVLEVNPRASRTVPIVSKTTGVPLAQIATKLLLGKSLVDIVDEKARGLAVMPYAVLKYPVFSTHKLPGVDPMVGPEMKSTGEGISIAATKEEAAYKAFYPYLQKKANANEVYVIGNIDAELEAEMTAKQLTIVADVPFSDWVKRDTALAVIDLGKEEGEANKRMTALSRQLLVFTERETLKLFLQALDVDHLDVQPIHGWLEKKKQAEQAVIA</sequence>
<proteinExistence type="inferred from homology"/>
<protein>
    <recommendedName>
        <fullName evidence="2">Carbamoyl phosphate synthase arginine-specific large chain</fullName>
        <ecNumber evidence="1">6.3.4.16</ecNumber>
        <ecNumber evidence="1">6.3.5.5</ecNumber>
    </recommendedName>
    <alternativeName>
        <fullName evidence="1">Carbamoyl phosphate synthetase ammonia chain</fullName>
    </alternativeName>
</protein>
<comment type="function">
    <text evidence="2">Large subunit of the glutamine-dependent carbamoyl phosphate synthetase (CPSase). CPSase catalyzes the formation of carbamoyl phosphate from the ammonia moiety of glutamine, carbonate, and phosphate donated by ATP, constituting the first step of the biosynthetic pathway leading to arginine and/or urea. The large subunit (synthetase) binds the substrates ammonia (free or transferred from glutamine from the small subunit), hydrogencarbonate and ATP and carries out an ATP-coupled ligase reaction, activating hydrogencarbonate by forming carboxy phosphate which reacts with ammonia to form carbamoyl phosphate.</text>
</comment>
<comment type="catalytic activity">
    <reaction evidence="1">
        <text>hydrogencarbonate + L-glutamine + 2 ATP + H2O = carbamoyl phosphate + L-glutamate + 2 ADP + phosphate + 2 H(+)</text>
        <dbReference type="Rhea" id="RHEA:18633"/>
        <dbReference type="ChEBI" id="CHEBI:15377"/>
        <dbReference type="ChEBI" id="CHEBI:15378"/>
        <dbReference type="ChEBI" id="CHEBI:17544"/>
        <dbReference type="ChEBI" id="CHEBI:29985"/>
        <dbReference type="ChEBI" id="CHEBI:30616"/>
        <dbReference type="ChEBI" id="CHEBI:43474"/>
        <dbReference type="ChEBI" id="CHEBI:58228"/>
        <dbReference type="ChEBI" id="CHEBI:58359"/>
        <dbReference type="ChEBI" id="CHEBI:456216"/>
        <dbReference type="EC" id="6.3.5.5"/>
    </reaction>
</comment>
<comment type="catalytic activity">
    <molecule>Carbamoyl phosphate synthase arginine-specific large chain</molecule>
    <reaction evidence="1">
        <text>hydrogencarbonate + NH4(+) + 2 ATP = carbamoyl phosphate + 2 ADP + phosphate + 2 H(+)</text>
        <dbReference type="Rhea" id="RHEA:18029"/>
        <dbReference type="ChEBI" id="CHEBI:15378"/>
        <dbReference type="ChEBI" id="CHEBI:17544"/>
        <dbReference type="ChEBI" id="CHEBI:28938"/>
        <dbReference type="ChEBI" id="CHEBI:30616"/>
        <dbReference type="ChEBI" id="CHEBI:43474"/>
        <dbReference type="ChEBI" id="CHEBI:58228"/>
        <dbReference type="ChEBI" id="CHEBI:456216"/>
        <dbReference type="EC" id="6.3.4.16"/>
    </reaction>
</comment>
<comment type="cofactor">
    <cofactor evidence="1">
        <name>Mg(2+)</name>
        <dbReference type="ChEBI" id="CHEBI:18420"/>
    </cofactor>
    <cofactor evidence="1">
        <name>Mn(2+)</name>
        <dbReference type="ChEBI" id="CHEBI:29035"/>
    </cofactor>
    <text evidence="1">Binds 4 Mg(2+) or Mn(2+) ions per subunit.</text>
</comment>
<comment type="pathway">
    <text evidence="1">Amino-acid biosynthesis; L-arginine biosynthesis; carbamoyl phosphate from bicarbonate: step 1/1.</text>
</comment>
<comment type="subunit">
    <text evidence="1">Composed of two chains; the small (or glutamine) chain promotes the hydrolysis of glutamine to ammonia, which is used by the large (or ammonia) chain to synthesize carbamoyl phosphate. Tetramer of heterodimers (alpha,beta)4.</text>
</comment>
<comment type="domain">
    <text evidence="1">The large subunit is composed of 2 ATP-grasp domains that are involved in binding the 2 ATP molecules needed for carbamoyl phosphate synthesis. The N-terminal ATP-grasp domain (referred to as the carboxyphosphate synthetic component) catalyzes the ATP-dependent phosphorylation of hydrogencarbonate to carboxyphosphate and the subsequent nucleophilic attack by ammonia to form a carbamate intermediate. The C-terminal ATP-grasp domain (referred to as the carbamoyl phosphate synthetic component) then catalyzes the phosphorylation of carbamate with the second ATP to form the end product carbamoyl phosphate. The reactive and unstable enzyme intermediates are sequentially channeled from one active site to the next through the interior of the protein over a distance of at least 96 A.</text>
</comment>
<comment type="similarity">
    <text evidence="1">Belongs to the CarB family.</text>
</comment>
<dbReference type="EC" id="6.3.4.16" evidence="1"/>
<dbReference type="EC" id="6.3.5.5" evidence="1"/>
<dbReference type="EMBL" id="U43091">
    <property type="protein sequence ID" value="AAC78719.1"/>
    <property type="molecule type" value="Genomic_DNA"/>
</dbReference>
<dbReference type="SMR" id="Q9ZB63"/>
<dbReference type="SABIO-RK" id="Q9ZB63"/>
<dbReference type="UniPathway" id="UPA00068">
    <property type="reaction ID" value="UER00171"/>
</dbReference>
<dbReference type="GO" id="GO:0005737">
    <property type="term" value="C:cytoplasm"/>
    <property type="evidence" value="ECO:0007669"/>
    <property type="project" value="TreeGrafter"/>
</dbReference>
<dbReference type="GO" id="GO:0005524">
    <property type="term" value="F:ATP binding"/>
    <property type="evidence" value="ECO:0007669"/>
    <property type="project" value="UniProtKB-UniRule"/>
</dbReference>
<dbReference type="GO" id="GO:0004087">
    <property type="term" value="F:carbamoyl-phosphate synthase (ammonia) activity"/>
    <property type="evidence" value="ECO:0007669"/>
    <property type="project" value="RHEA"/>
</dbReference>
<dbReference type="GO" id="GO:0004088">
    <property type="term" value="F:carbamoyl-phosphate synthase (glutamine-hydrolyzing) activity"/>
    <property type="evidence" value="ECO:0007669"/>
    <property type="project" value="UniProtKB-UniRule"/>
</dbReference>
<dbReference type="GO" id="GO:0046872">
    <property type="term" value="F:metal ion binding"/>
    <property type="evidence" value="ECO:0007669"/>
    <property type="project" value="UniProtKB-KW"/>
</dbReference>
<dbReference type="GO" id="GO:0044205">
    <property type="term" value="P:'de novo' UMP biosynthetic process"/>
    <property type="evidence" value="ECO:0007669"/>
    <property type="project" value="UniProtKB-UniRule"/>
</dbReference>
<dbReference type="GO" id="GO:0006541">
    <property type="term" value="P:glutamine metabolic process"/>
    <property type="evidence" value="ECO:0007669"/>
    <property type="project" value="TreeGrafter"/>
</dbReference>
<dbReference type="GO" id="GO:0006526">
    <property type="term" value="P:L-arginine biosynthetic process"/>
    <property type="evidence" value="ECO:0007669"/>
    <property type="project" value="UniProtKB-UniRule"/>
</dbReference>
<dbReference type="FunFam" id="1.10.1030.10:FF:000002">
    <property type="entry name" value="Carbamoyl-phosphate synthase large chain"/>
    <property type="match status" value="1"/>
</dbReference>
<dbReference type="FunFam" id="3.30.470.20:FF:000001">
    <property type="entry name" value="Carbamoyl-phosphate synthase large chain"/>
    <property type="match status" value="1"/>
</dbReference>
<dbReference type="FunFam" id="3.30.470.20:FF:000026">
    <property type="entry name" value="Carbamoyl-phosphate synthase large chain"/>
    <property type="match status" value="1"/>
</dbReference>
<dbReference type="FunFam" id="3.40.50.20:FF:000001">
    <property type="entry name" value="Carbamoyl-phosphate synthase large chain"/>
    <property type="match status" value="2"/>
</dbReference>
<dbReference type="Gene3D" id="3.40.50.20">
    <property type="match status" value="2"/>
</dbReference>
<dbReference type="Gene3D" id="3.30.1490.20">
    <property type="entry name" value="ATP-grasp fold, A domain"/>
    <property type="match status" value="1"/>
</dbReference>
<dbReference type="Gene3D" id="3.30.470.20">
    <property type="entry name" value="ATP-grasp fold, B domain"/>
    <property type="match status" value="2"/>
</dbReference>
<dbReference type="Gene3D" id="1.10.1030.10">
    <property type="entry name" value="Carbamoyl-phosphate synthetase, large subunit oligomerisation domain"/>
    <property type="match status" value="1"/>
</dbReference>
<dbReference type="HAMAP" id="MF_01210_B">
    <property type="entry name" value="CPSase_L_chain_B"/>
    <property type="match status" value="1"/>
</dbReference>
<dbReference type="InterPro" id="IPR011761">
    <property type="entry name" value="ATP-grasp"/>
</dbReference>
<dbReference type="InterPro" id="IPR013815">
    <property type="entry name" value="ATP_grasp_subdomain_1"/>
</dbReference>
<dbReference type="InterPro" id="IPR006275">
    <property type="entry name" value="CarbamoylP_synth_lsu"/>
</dbReference>
<dbReference type="InterPro" id="IPR005480">
    <property type="entry name" value="CarbamoylP_synth_lsu_oligo"/>
</dbReference>
<dbReference type="InterPro" id="IPR036897">
    <property type="entry name" value="CarbamoylP_synth_lsu_oligo_sf"/>
</dbReference>
<dbReference type="InterPro" id="IPR005479">
    <property type="entry name" value="CbamoylP_synth_lsu-like_ATP-bd"/>
</dbReference>
<dbReference type="InterPro" id="IPR005483">
    <property type="entry name" value="CbamoylP_synth_lsu_CPSase_dom"/>
</dbReference>
<dbReference type="InterPro" id="IPR011607">
    <property type="entry name" value="MGS-like_dom"/>
</dbReference>
<dbReference type="InterPro" id="IPR016185">
    <property type="entry name" value="PreATP-grasp_dom_sf"/>
</dbReference>
<dbReference type="NCBIfam" id="TIGR01369">
    <property type="entry name" value="CPSaseII_lrg"/>
    <property type="match status" value="1"/>
</dbReference>
<dbReference type="NCBIfam" id="NF003671">
    <property type="entry name" value="PRK05294.1"/>
    <property type="match status" value="1"/>
</dbReference>
<dbReference type="NCBIfam" id="NF009455">
    <property type="entry name" value="PRK12815.1"/>
    <property type="match status" value="1"/>
</dbReference>
<dbReference type="PANTHER" id="PTHR11405:SF53">
    <property type="entry name" value="CARBAMOYL-PHOSPHATE SYNTHASE [AMMONIA], MITOCHONDRIAL"/>
    <property type="match status" value="1"/>
</dbReference>
<dbReference type="PANTHER" id="PTHR11405">
    <property type="entry name" value="CARBAMOYLTRANSFERASE FAMILY MEMBER"/>
    <property type="match status" value="1"/>
</dbReference>
<dbReference type="Pfam" id="PF02786">
    <property type="entry name" value="CPSase_L_D2"/>
    <property type="match status" value="2"/>
</dbReference>
<dbReference type="Pfam" id="PF02787">
    <property type="entry name" value="CPSase_L_D3"/>
    <property type="match status" value="1"/>
</dbReference>
<dbReference type="PRINTS" id="PR00098">
    <property type="entry name" value="CPSASE"/>
</dbReference>
<dbReference type="SMART" id="SM01096">
    <property type="entry name" value="CPSase_L_D3"/>
    <property type="match status" value="1"/>
</dbReference>
<dbReference type="SUPFAM" id="SSF48108">
    <property type="entry name" value="Carbamoyl phosphate synthetase, large subunit connection domain"/>
    <property type="match status" value="1"/>
</dbReference>
<dbReference type="SUPFAM" id="SSF56059">
    <property type="entry name" value="Glutathione synthetase ATP-binding domain-like"/>
    <property type="match status" value="2"/>
</dbReference>
<dbReference type="SUPFAM" id="SSF52440">
    <property type="entry name" value="PreATP-grasp domain"/>
    <property type="match status" value="2"/>
</dbReference>
<dbReference type="PROSITE" id="PS50975">
    <property type="entry name" value="ATP_GRASP"/>
    <property type="match status" value="2"/>
</dbReference>
<dbReference type="PROSITE" id="PS00866">
    <property type="entry name" value="CPSASE_1"/>
    <property type="match status" value="2"/>
</dbReference>
<dbReference type="PROSITE" id="PS00867">
    <property type="entry name" value="CPSASE_2"/>
    <property type="match status" value="2"/>
</dbReference>
<dbReference type="PROSITE" id="PS51855">
    <property type="entry name" value="MGS"/>
    <property type="match status" value="1"/>
</dbReference>
<reference key="1">
    <citation type="journal article" date="1997" name="Eur. J. Biochem.">
        <title>Cloning and characterization of the arginine-specific carbamoyl-phosphate synthetase from Bacillus stearothermophilus.</title>
        <authorList>
            <person name="Yang H."/>
            <person name="Park S.M."/>
            <person name="Nolan W.G."/>
            <person name="Lu C.-D."/>
            <person name="Abdelal A.T."/>
        </authorList>
    </citation>
    <scope>NUCLEOTIDE SEQUENCE [GENOMIC DNA]</scope>
    <source>
        <strain>ATCC 12980 / DSM 22 / CCM 2062 / JCM 2501 / NBRC 12550 / NCIMB 8923 / NCTC 10339 / R-35646 / VKM B-510</strain>
    </source>
</reference>
<reference key="2">
    <citation type="submission" date="1998-11" db="EMBL/GenBank/DDBJ databases">
        <authorList>
            <person name="Abdelal A.T."/>
        </authorList>
    </citation>
    <scope>SEQUENCE REVISION</scope>
</reference>
<evidence type="ECO:0000255" key="1">
    <source>
        <dbReference type="HAMAP-Rule" id="MF_01210"/>
    </source>
</evidence>
<evidence type="ECO:0000305" key="2"/>